<accession>Q82E60</accession>
<organism>
    <name type="scientific">Streptomyces avermitilis (strain ATCC 31267 / DSM 46492 / JCM 5070 / NBRC 14893 / NCIMB 12804 / NRRL 8165 / MA-4680)</name>
    <dbReference type="NCBI Taxonomy" id="227882"/>
    <lineage>
        <taxon>Bacteria</taxon>
        <taxon>Bacillati</taxon>
        <taxon>Actinomycetota</taxon>
        <taxon>Actinomycetes</taxon>
        <taxon>Kitasatosporales</taxon>
        <taxon>Streptomycetaceae</taxon>
        <taxon>Streptomyces</taxon>
    </lineage>
</organism>
<reference key="1">
    <citation type="journal article" date="2001" name="Proc. Natl. Acad. Sci. U.S.A.">
        <title>Genome sequence of an industrial microorganism Streptomyces avermitilis: deducing the ability of producing secondary metabolites.</title>
        <authorList>
            <person name="Omura S."/>
            <person name="Ikeda H."/>
            <person name="Ishikawa J."/>
            <person name="Hanamoto A."/>
            <person name="Takahashi C."/>
            <person name="Shinose M."/>
            <person name="Takahashi Y."/>
            <person name="Horikawa H."/>
            <person name="Nakazawa H."/>
            <person name="Osonoe T."/>
            <person name="Kikuchi H."/>
            <person name="Shiba T."/>
            <person name="Sakaki Y."/>
            <person name="Hattori M."/>
        </authorList>
    </citation>
    <scope>NUCLEOTIDE SEQUENCE [LARGE SCALE GENOMIC DNA]</scope>
    <source>
        <strain>ATCC 31267 / DSM 46492 / JCM 5070 / NBRC 14893 / NCIMB 12804 / NRRL 8165 / MA-4680</strain>
    </source>
</reference>
<reference key="2">
    <citation type="journal article" date="2003" name="Nat. Biotechnol.">
        <title>Complete genome sequence and comparative analysis of the industrial microorganism Streptomyces avermitilis.</title>
        <authorList>
            <person name="Ikeda H."/>
            <person name="Ishikawa J."/>
            <person name="Hanamoto A."/>
            <person name="Shinose M."/>
            <person name="Kikuchi H."/>
            <person name="Shiba T."/>
            <person name="Sakaki Y."/>
            <person name="Hattori M."/>
            <person name="Omura S."/>
        </authorList>
    </citation>
    <scope>NUCLEOTIDE SEQUENCE [LARGE SCALE GENOMIC DNA]</scope>
    <source>
        <strain>ATCC 31267 / DSM 46492 / JCM 5070 / NBRC 14893 / NCIMB 12804 / NRRL 8165 / MA-4680</strain>
    </source>
</reference>
<feature type="chain" id="PRO_0000162352" description="UPF0060 membrane protein SAV_4756">
    <location>
        <begin position="1"/>
        <end position="112"/>
    </location>
</feature>
<feature type="transmembrane region" description="Helical" evidence="1">
    <location>
        <begin position="8"/>
        <end position="28"/>
    </location>
</feature>
<feature type="transmembrane region" description="Helical" evidence="1">
    <location>
        <begin position="33"/>
        <end position="53"/>
    </location>
</feature>
<feature type="transmembrane region" description="Helical" evidence="1">
    <location>
        <begin position="62"/>
        <end position="82"/>
    </location>
</feature>
<feature type="transmembrane region" description="Helical" evidence="1">
    <location>
        <begin position="91"/>
        <end position="111"/>
    </location>
</feature>
<comment type="subcellular location">
    <subcellularLocation>
        <location evidence="1">Cell membrane</location>
        <topology evidence="1">Multi-pass membrane protein</topology>
    </subcellularLocation>
</comment>
<comment type="similarity">
    <text evidence="1">Belongs to the UPF0060 family.</text>
</comment>
<proteinExistence type="inferred from homology"/>
<name>Y4756_STRAW</name>
<sequence length="112" mass="11920">MLVLRSAALFVAAALFEIGGAWLVWQGVREHRGWLWIGAGVMALGVYGFVATLQPDAEFGRILAAYGGVFVAGSLAWGMVADGYRPDRWDVTGALICLAGMTVIMYAPRGGN</sequence>
<protein>
    <recommendedName>
        <fullName evidence="1">UPF0060 membrane protein SAV_4756</fullName>
    </recommendedName>
</protein>
<evidence type="ECO:0000255" key="1">
    <source>
        <dbReference type="HAMAP-Rule" id="MF_00010"/>
    </source>
</evidence>
<keyword id="KW-1003">Cell membrane</keyword>
<keyword id="KW-0472">Membrane</keyword>
<keyword id="KW-1185">Reference proteome</keyword>
<keyword id="KW-0812">Transmembrane</keyword>
<keyword id="KW-1133">Transmembrane helix</keyword>
<gene>
    <name type="ordered locus">SAV_4756</name>
</gene>
<dbReference type="EMBL" id="BA000030">
    <property type="protein sequence ID" value="BAC72468.1"/>
    <property type="molecule type" value="Genomic_DNA"/>
</dbReference>
<dbReference type="RefSeq" id="WP_010986179.1">
    <property type="nucleotide sequence ID" value="NZ_JZJK01000077.1"/>
</dbReference>
<dbReference type="SMR" id="Q82E60"/>
<dbReference type="DNASU" id="1215508"/>
<dbReference type="GeneID" id="41541839"/>
<dbReference type="KEGG" id="sma:SAVERM_4756"/>
<dbReference type="eggNOG" id="COG1742">
    <property type="taxonomic scope" value="Bacteria"/>
</dbReference>
<dbReference type="HOGENOM" id="CLU_117653_0_1_11"/>
<dbReference type="OrthoDB" id="123240at2"/>
<dbReference type="Proteomes" id="UP000000428">
    <property type="component" value="Chromosome"/>
</dbReference>
<dbReference type="GO" id="GO:0005886">
    <property type="term" value="C:plasma membrane"/>
    <property type="evidence" value="ECO:0007669"/>
    <property type="project" value="UniProtKB-SubCell"/>
</dbReference>
<dbReference type="HAMAP" id="MF_00010">
    <property type="entry name" value="UPF0060"/>
    <property type="match status" value="1"/>
</dbReference>
<dbReference type="InterPro" id="IPR003844">
    <property type="entry name" value="UPF0060"/>
</dbReference>
<dbReference type="NCBIfam" id="NF002586">
    <property type="entry name" value="PRK02237.1"/>
    <property type="match status" value="1"/>
</dbReference>
<dbReference type="PANTHER" id="PTHR36116">
    <property type="entry name" value="UPF0060 MEMBRANE PROTEIN YNFA"/>
    <property type="match status" value="1"/>
</dbReference>
<dbReference type="PANTHER" id="PTHR36116:SF1">
    <property type="entry name" value="UPF0060 MEMBRANE PROTEIN YNFA"/>
    <property type="match status" value="1"/>
</dbReference>
<dbReference type="Pfam" id="PF02694">
    <property type="entry name" value="UPF0060"/>
    <property type="match status" value="1"/>
</dbReference>
<dbReference type="SUPFAM" id="SSF103481">
    <property type="entry name" value="Multidrug resistance efflux transporter EmrE"/>
    <property type="match status" value="1"/>
</dbReference>